<protein>
    <recommendedName>
        <fullName>UPF0339 protein plu2779</fullName>
    </recommendedName>
</protein>
<sequence length="114" mass="12753">MAVGHYDLKRTKNKQYYFNLKASNGEVILTSEMYTTKAAANKGIRSVQANSPAEKNFEIRENKSGKSYFVLKARNYQVIGISESYDNEVAVKKGIQSAIKHGSSVNVRDLTKSE</sequence>
<reference key="1">
    <citation type="journal article" date="2003" name="Nat. Biotechnol.">
        <title>The genome sequence of the entomopathogenic bacterium Photorhabdus luminescens.</title>
        <authorList>
            <person name="Duchaud E."/>
            <person name="Rusniok C."/>
            <person name="Frangeul L."/>
            <person name="Buchrieser C."/>
            <person name="Givaudan A."/>
            <person name="Taourit S."/>
            <person name="Bocs S."/>
            <person name="Boursaux-Eude C."/>
            <person name="Chandler M."/>
            <person name="Charles J.-F."/>
            <person name="Dassa E."/>
            <person name="Derose R."/>
            <person name="Derzelle S."/>
            <person name="Freyssinet G."/>
            <person name="Gaudriault S."/>
            <person name="Medigue C."/>
            <person name="Lanois A."/>
            <person name="Powell K."/>
            <person name="Siguier P."/>
            <person name="Vincent R."/>
            <person name="Wingate V."/>
            <person name="Zouine M."/>
            <person name="Glaser P."/>
            <person name="Boemare N."/>
            <person name="Danchin A."/>
            <person name="Kunst F."/>
        </authorList>
    </citation>
    <scope>NUCLEOTIDE SEQUENCE [LARGE SCALE GENOMIC DNA]</scope>
    <source>
        <strain>DSM 15139 / CIP 105565 / TT01</strain>
    </source>
</reference>
<proteinExistence type="inferred from homology"/>
<accession>Q7N3D8</accession>
<comment type="similarity">
    <text evidence="1">Belongs to the UPF0339 family. Duplicated subfamily.</text>
</comment>
<gene>
    <name type="ordered locus">plu2779</name>
</gene>
<evidence type="ECO:0000305" key="1"/>
<keyword id="KW-1185">Reference proteome</keyword>
<keyword id="KW-0677">Repeat</keyword>
<name>Y2779_PHOLL</name>
<dbReference type="EMBL" id="BX571868">
    <property type="protein sequence ID" value="CAE15153.1"/>
    <property type="molecule type" value="Genomic_DNA"/>
</dbReference>
<dbReference type="RefSeq" id="WP_011146999.1">
    <property type="nucleotide sequence ID" value="NC_005126.1"/>
</dbReference>
<dbReference type="SMR" id="Q7N3D8"/>
<dbReference type="STRING" id="243265.plu2779"/>
<dbReference type="GeneID" id="88804902"/>
<dbReference type="KEGG" id="plu:plu2779"/>
<dbReference type="eggNOG" id="COG3422">
    <property type="taxonomic scope" value="Bacteria"/>
</dbReference>
<dbReference type="HOGENOM" id="CLU_163886_0_0_6"/>
<dbReference type="OrthoDB" id="9802792at2"/>
<dbReference type="Proteomes" id="UP000002514">
    <property type="component" value="Chromosome"/>
</dbReference>
<dbReference type="Gene3D" id="2.30.29.80">
    <property type="match status" value="1"/>
</dbReference>
<dbReference type="InterPro" id="IPR010879">
    <property type="entry name" value="DUF1508"/>
</dbReference>
<dbReference type="InterPro" id="IPR051141">
    <property type="entry name" value="UPF0339_domain"/>
</dbReference>
<dbReference type="InterPro" id="IPR036913">
    <property type="entry name" value="YegP-like_sf"/>
</dbReference>
<dbReference type="PANTHER" id="PTHR40606">
    <property type="match status" value="1"/>
</dbReference>
<dbReference type="PANTHER" id="PTHR40606:SF1">
    <property type="entry name" value="UPF0339 PROTEIN YEGP"/>
    <property type="match status" value="1"/>
</dbReference>
<dbReference type="Pfam" id="PF07411">
    <property type="entry name" value="DUF1508"/>
    <property type="match status" value="2"/>
</dbReference>
<dbReference type="SUPFAM" id="SSF160113">
    <property type="entry name" value="YegP-like"/>
    <property type="match status" value="2"/>
</dbReference>
<organism>
    <name type="scientific">Photorhabdus laumondii subsp. laumondii (strain DSM 15139 / CIP 105565 / TT01)</name>
    <name type="common">Photorhabdus luminescens subsp. laumondii</name>
    <dbReference type="NCBI Taxonomy" id="243265"/>
    <lineage>
        <taxon>Bacteria</taxon>
        <taxon>Pseudomonadati</taxon>
        <taxon>Pseudomonadota</taxon>
        <taxon>Gammaproteobacteria</taxon>
        <taxon>Enterobacterales</taxon>
        <taxon>Morganellaceae</taxon>
        <taxon>Photorhabdus</taxon>
    </lineage>
</organism>
<feature type="chain" id="PRO_0000218142" description="UPF0339 protein plu2779">
    <location>
        <begin position="1"/>
        <end position="114"/>
    </location>
</feature>
<feature type="repeat" description="1">
    <location>
        <begin position="11"/>
        <end position="59"/>
    </location>
</feature>
<feature type="repeat" description="2">
    <location>
        <begin position="62"/>
        <end position="110"/>
    </location>
</feature>